<reference key="1">
    <citation type="journal article" date="2004" name="Science">
        <title>The Ashbya gossypii genome as a tool for mapping the ancient Saccharomyces cerevisiae genome.</title>
        <authorList>
            <person name="Dietrich F.S."/>
            <person name="Voegeli S."/>
            <person name="Brachat S."/>
            <person name="Lerch A."/>
            <person name="Gates K."/>
            <person name="Steiner S."/>
            <person name="Mohr C."/>
            <person name="Poehlmann R."/>
            <person name="Luedi P."/>
            <person name="Choi S."/>
            <person name="Wing R.A."/>
            <person name="Flavier A."/>
            <person name="Gaffney T.D."/>
            <person name="Philippsen P."/>
        </authorList>
    </citation>
    <scope>NUCLEOTIDE SEQUENCE [LARGE SCALE GENOMIC DNA]</scope>
    <source>
        <strain>ATCC 10895 / CBS 109.51 / FGSC 9923 / NRRL Y-1056</strain>
    </source>
</reference>
<reference key="2">
    <citation type="journal article" date="2013" name="G3 (Bethesda)">
        <title>Genomes of Ashbya fungi isolated from insects reveal four mating-type loci, numerous translocations, lack of transposons, and distinct gene duplications.</title>
        <authorList>
            <person name="Dietrich F.S."/>
            <person name="Voegeli S."/>
            <person name="Kuo S."/>
            <person name="Philippsen P."/>
        </authorList>
    </citation>
    <scope>GENOME REANNOTATION</scope>
    <source>
        <strain>ATCC 10895 / CBS 109.51 / FGSC 9923 / NRRL Y-1056</strain>
    </source>
</reference>
<protein>
    <recommendedName>
        <fullName evidence="1">Protein N-terminal and lysine N-methyltransferase EFM7</fullName>
        <ecNumber evidence="1">2.1.1.-</ecNumber>
    </recommendedName>
    <alternativeName>
        <fullName evidence="1">Elongation factor methyltransferase 7</fullName>
    </alternativeName>
</protein>
<proteinExistence type="inferred from homology"/>
<gene>
    <name evidence="1" type="primary">EFM7</name>
    <name type="synonym">NNT1</name>
    <name type="ordered locus">AGR284W</name>
</gene>
<organism>
    <name type="scientific">Eremothecium gossypii (strain ATCC 10895 / CBS 109.51 / FGSC 9923 / NRRL Y-1056)</name>
    <name type="common">Yeast</name>
    <name type="synonym">Ashbya gossypii</name>
    <dbReference type="NCBI Taxonomy" id="284811"/>
    <lineage>
        <taxon>Eukaryota</taxon>
        <taxon>Fungi</taxon>
        <taxon>Dikarya</taxon>
        <taxon>Ascomycota</taxon>
        <taxon>Saccharomycotina</taxon>
        <taxon>Saccharomycetes</taxon>
        <taxon>Saccharomycetales</taxon>
        <taxon>Saccharomycetaceae</taxon>
        <taxon>Eremothecium</taxon>
    </lineage>
</organism>
<accession>Q74ZB5</accession>
<feature type="chain" id="PRO_0000096889" description="Protein N-terminal and lysine N-methyltransferase EFM7">
    <location>
        <begin position="1"/>
        <end position="265"/>
    </location>
</feature>
<feature type="region of interest" description="Disordered" evidence="2">
    <location>
        <begin position="1"/>
        <end position="25"/>
    </location>
</feature>
<feature type="binding site" evidence="1">
    <location>
        <position position="67"/>
    </location>
    <ligand>
        <name>S-adenosyl-L-methionine</name>
        <dbReference type="ChEBI" id="CHEBI:59789"/>
    </ligand>
</feature>
<feature type="binding site" evidence="1">
    <location>
        <begin position="93"/>
        <end position="95"/>
    </location>
    <ligand>
        <name>S-adenosyl-L-methionine</name>
        <dbReference type="ChEBI" id="CHEBI:59789"/>
    </ligand>
</feature>
<feature type="binding site" evidence="1">
    <location>
        <position position="115"/>
    </location>
    <ligand>
        <name>S-adenosyl-L-methionine</name>
        <dbReference type="ChEBI" id="CHEBI:59789"/>
    </ligand>
</feature>
<feature type="binding site" evidence="1">
    <location>
        <position position="152"/>
    </location>
    <ligand>
        <name>S-adenosyl-L-methionine</name>
        <dbReference type="ChEBI" id="CHEBI:59789"/>
    </ligand>
</feature>
<feature type="binding site" evidence="1">
    <location>
        <position position="176"/>
    </location>
    <ligand>
        <name>S-adenosyl-L-methionine</name>
        <dbReference type="ChEBI" id="CHEBI:59789"/>
    </ligand>
</feature>
<dbReference type="EC" id="2.1.1.-" evidence="1"/>
<dbReference type="EMBL" id="AE016820">
    <property type="protein sequence ID" value="AAS54774.1"/>
    <property type="molecule type" value="Genomic_DNA"/>
</dbReference>
<dbReference type="RefSeq" id="NP_986950.1">
    <property type="nucleotide sequence ID" value="NM_212012.1"/>
</dbReference>
<dbReference type="SMR" id="Q74ZB5"/>
<dbReference type="FunCoup" id="Q74ZB5">
    <property type="interactions" value="147"/>
</dbReference>
<dbReference type="STRING" id="284811.Q74ZB5"/>
<dbReference type="EnsemblFungi" id="AAS54774">
    <property type="protein sequence ID" value="AAS54774"/>
    <property type="gene ID" value="AGOS_AGR284W"/>
</dbReference>
<dbReference type="GeneID" id="4623252"/>
<dbReference type="KEGG" id="ago:AGOS_AGR284W"/>
<dbReference type="eggNOG" id="KOG2920">
    <property type="taxonomic scope" value="Eukaryota"/>
</dbReference>
<dbReference type="HOGENOM" id="CLU_032409_0_0_1"/>
<dbReference type="InParanoid" id="Q74ZB5"/>
<dbReference type="OMA" id="VGHNPLW"/>
<dbReference type="OrthoDB" id="46564at2759"/>
<dbReference type="Proteomes" id="UP000000591">
    <property type="component" value="Chromosome VII"/>
</dbReference>
<dbReference type="GO" id="GO:0005737">
    <property type="term" value="C:cytoplasm"/>
    <property type="evidence" value="ECO:0007669"/>
    <property type="project" value="UniProtKB-SubCell"/>
</dbReference>
<dbReference type="GO" id="GO:0071885">
    <property type="term" value="F:N-terminal protein N-methyltransferase activity"/>
    <property type="evidence" value="ECO:0007669"/>
    <property type="project" value="UniProtKB-UniRule"/>
</dbReference>
<dbReference type="GO" id="GO:0008276">
    <property type="term" value="F:protein methyltransferase activity"/>
    <property type="evidence" value="ECO:0000318"/>
    <property type="project" value="GO_Central"/>
</dbReference>
<dbReference type="GO" id="GO:0016279">
    <property type="term" value="F:protein-lysine N-methyltransferase activity"/>
    <property type="evidence" value="ECO:0007669"/>
    <property type="project" value="UniProtKB-UniRule"/>
</dbReference>
<dbReference type="GO" id="GO:0032259">
    <property type="term" value="P:methylation"/>
    <property type="evidence" value="ECO:0007669"/>
    <property type="project" value="UniProtKB-KW"/>
</dbReference>
<dbReference type="GO" id="GO:0000183">
    <property type="term" value="P:rDNA heterochromatin formation"/>
    <property type="evidence" value="ECO:0007669"/>
    <property type="project" value="EnsemblFungi"/>
</dbReference>
<dbReference type="Gene3D" id="3.40.50.150">
    <property type="entry name" value="Vaccinia Virus protein VP39"/>
    <property type="match status" value="1"/>
</dbReference>
<dbReference type="HAMAP" id="MF_03223">
    <property type="entry name" value="Methyltr_EFM7"/>
    <property type="match status" value="1"/>
</dbReference>
<dbReference type="InterPro" id="IPR025784">
    <property type="entry name" value="EFM7"/>
</dbReference>
<dbReference type="InterPro" id="IPR019410">
    <property type="entry name" value="Methyltransf_16"/>
</dbReference>
<dbReference type="InterPro" id="IPR029063">
    <property type="entry name" value="SAM-dependent_MTases_sf"/>
</dbReference>
<dbReference type="PANTHER" id="PTHR14614">
    <property type="entry name" value="HEPATOCELLULAR CARCINOMA-ASSOCIATED ANTIGEN"/>
    <property type="match status" value="1"/>
</dbReference>
<dbReference type="PANTHER" id="PTHR14614:SF10">
    <property type="entry name" value="PROTEIN N-TERMINAL AND LYSINE N-METHYLTRANSFERASE EFM7"/>
    <property type="match status" value="1"/>
</dbReference>
<dbReference type="Pfam" id="PF10294">
    <property type="entry name" value="Methyltransf_16"/>
    <property type="match status" value="1"/>
</dbReference>
<dbReference type="SUPFAM" id="SSF53335">
    <property type="entry name" value="S-adenosyl-L-methionine-dependent methyltransferases"/>
    <property type="match status" value="1"/>
</dbReference>
<dbReference type="PROSITE" id="PS51560">
    <property type="entry name" value="SAM_MT_NNT1"/>
    <property type="match status" value="1"/>
</dbReference>
<keyword id="KW-0963">Cytoplasm</keyword>
<keyword id="KW-0489">Methyltransferase</keyword>
<keyword id="KW-1185">Reference proteome</keyword>
<keyword id="KW-0949">S-adenosyl-L-methionine</keyword>
<keyword id="KW-0808">Transferase</keyword>
<evidence type="ECO:0000255" key="1">
    <source>
        <dbReference type="HAMAP-Rule" id="MF_03223"/>
    </source>
</evidence>
<evidence type="ECO:0000256" key="2">
    <source>
        <dbReference type="SAM" id="MobiDB-lite"/>
    </source>
</evidence>
<comment type="function">
    <text evidence="1">S-adenosyl-L-methionine-dependent protein methyltransferase that trimethylates the N-terminal glycine 'Gly-2' of elongation factor 1-alpha, before also catalyzing the mono- and dimethylation of 'Lys-3'.</text>
</comment>
<comment type="subcellular location">
    <subcellularLocation>
        <location evidence="1">Cytoplasm</location>
    </subcellularLocation>
</comment>
<comment type="similarity">
    <text evidence="1">Belongs to the class I-like SAM-binding methyltransferase superfamily. EFM7 family.</text>
</comment>
<name>EFM7_EREGS</name>
<sequence length="265" mass="29379">MSSDHEEDSLYGATELFGEPDGFYEKPAESHFAEYERSAVPAQSARRDTQVRIRLVGSSPLWGHLLWNSAIYTARHLDAHPEQVVGRCVLELGAAGALPSLVAGLLGARQVVATDYPDADLVGNIQYNVDHVIYGGKPPTEAPHVAVEGYIWGNDYGPLRRHLPPGQTGFDLVLLSDLVFNHTEHHKLLQTTRDLLAPAGRALVVFSPHRPWLLEKDLQFFETAAEYGLRAELIEQVTWAPMFADDPGPAEVRARVYAYYLTHCA</sequence>